<feature type="chain" id="PRO_1000120604" description="Small ribosomal subunit protein bS21">
    <location>
        <begin position="1"/>
        <end position="58"/>
    </location>
</feature>
<feature type="region of interest" description="Disordered" evidence="2">
    <location>
        <begin position="32"/>
        <end position="58"/>
    </location>
</feature>
<feature type="compositionally biased region" description="Basic and acidic residues" evidence="2">
    <location>
        <begin position="32"/>
        <end position="42"/>
    </location>
</feature>
<feature type="compositionally biased region" description="Basic residues" evidence="2">
    <location>
        <begin position="43"/>
        <end position="58"/>
    </location>
</feature>
<organism>
    <name type="scientific">Clostridium botulinum (strain Okra / Type B1)</name>
    <dbReference type="NCBI Taxonomy" id="498213"/>
    <lineage>
        <taxon>Bacteria</taxon>
        <taxon>Bacillati</taxon>
        <taxon>Bacillota</taxon>
        <taxon>Clostridia</taxon>
        <taxon>Eubacteriales</taxon>
        <taxon>Clostridiaceae</taxon>
        <taxon>Clostridium</taxon>
    </lineage>
</organism>
<reference key="1">
    <citation type="journal article" date="2007" name="PLoS ONE">
        <title>Analysis of the neurotoxin complex genes in Clostridium botulinum A1-A4 and B1 strains: BoNT/A3, /Ba4 and /B1 clusters are located within plasmids.</title>
        <authorList>
            <person name="Smith T.J."/>
            <person name="Hill K.K."/>
            <person name="Foley B.T."/>
            <person name="Detter J.C."/>
            <person name="Munk A.C."/>
            <person name="Bruce D.C."/>
            <person name="Doggett N.A."/>
            <person name="Smith L.A."/>
            <person name="Marks J.D."/>
            <person name="Xie G."/>
            <person name="Brettin T.S."/>
        </authorList>
    </citation>
    <scope>NUCLEOTIDE SEQUENCE [LARGE SCALE GENOMIC DNA]</scope>
    <source>
        <strain>Okra / Type B1</strain>
    </source>
</reference>
<sequence>MSEIKVGENESLENALRRFKKKCARAGVLSEVRKREHYEKPSVKKKKKSEAARKRKFK</sequence>
<evidence type="ECO:0000255" key="1">
    <source>
        <dbReference type="HAMAP-Rule" id="MF_00358"/>
    </source>
</evidence>
<evidence type="ECO:0000256" key="2">
    <source>
        <dbReference type="SAM" id="MobiDB-lite"/>
    </source>
</evidence>
<evidence type="ECO:0000305" key="3"/>
<name>RS21_CLOBK</name>
<protein>
    <recommendedName>
        <fullName evidence="1">Small ribosomal subunit protein bS21</fullName>
    </recommendedName>
    <alternativeName>
        <fullName evidence="3">30S ribosomal protein S21</fullName>
    </alternativeName>
</protein>
<accession>B1ILL7</accession>
<comment type="similarity">
    <text evidence="1">Belongs to the bacterial ribosomal protein bS21 family.</text>
</comment>
<keyword id="KW-0687">Ribonucleoprotein</keyword>
<keyword id="KW-0689">Ribosomal protein</keyword>
<gene>
    <name evidence="1" type="primary">rpsU</name>
    <name type="ordered locus">CLD_1592</name>
</gene>
<dbReference type="EMBL" id="CP000939">
    <property type="protein sequence ID" value="ACA46515.1"/>
    <property type="molecule type" value="Genomic_DNA"/>
</dbReference>
<dbReference type="RefSeq" id="WP_003357777.1">
    <property type="nucleotide sequence ID" value="NC_010516.1"/>
</dbReference>
<dbReference type="SMR" id="B1ILL7"/>
<dbReference type="GeneID" id="92939674"/>
<dbReference type="KEGG" id="cbb:CLD_1592"/>
<dbReference type="HOGENOM" id="CLU_159258_1_2_9"/>
<dbReference type="Proteomes" id="UP000008541">
    <property type="component" value="Chromosome"/>
</dbReference>
<dbReference type="GO" id="GO:1990904">
    <property type="term" value="C:ribonucleoprotein complex"/>
    <property type="evidence" value="ECO:0007669"/>
    <property type="project" value="UniProtKB-KW"/>
</dbReference>
<dbReference type="GO" id="GO:0005840">
    <property type="term" value="C:ribosome"/>
    <property type="evidence" value="ECO:0007669"/>
    <property type="project" value="UniProtKB-KW"/>
</dbReference>
<dbReference type="GO" id="GO:0003735">
    <property type="term" value="F:structural constituent of ribosome"/>
    <property type="evidence" value="ECO:0007669"/>
    <property type="project" value="InterPro"/>
</dbReference>
<dbReference type="GO" id="GO:0006412">
    <property type="term" value="P:translation"/>
    <property type="evidence" value="ECO:0007669"/>
    <property type="project" value="UniProtKB-UniRule"/>
</dbReference>
<dbReference type="Gene3D" id="1.20.5.1150">
    <property type="entry name" value="Ribosomal protein S8"/>
    <property type="match status" value="1"/>
</dbReference>
<dbReference type="HAMAP" id="MF_00358">
    <property type="entry name" value="Ribosomal_bS21"/>
    <property type="match status" value="1"/>
</dbReference>
<dbReference type="InterPro" id="IPR001911">
    <property type="entry name" value="Ribosomal_bS21"/>
</dbReference>
<dbReference type="InterPro" id="IPR018278">
    <property type="entry name" value="Ribosomal_bS21_CS"/>
</dbReference>
<dbReference type="InterPro" id="IPR038380">
    <property type="entry name" value="Ribosomal_bS21_sf"/>
</dbReference>
<dbReference type="NCBIfam" id="TIGR00030">
    <property type="entry name" value="S21p"/>
    <property type="match status" value="1"/>
</dbReference>
<dbReference type="PANTHER" id="PTHR21109">
    <property type="entry name" value="MITOCHONDRIAL 28S RIBOSOMAL PROTEIN S21"/>
    <property type="match status" value="1"/>
</dbReference>
<dbReference type="PANTHER" id="PTHR21109:SF22">
    <property type="entry name" value="SMALL RIBOSOMAL SUBUNIT PROTEIN BS21"/>
    <property type="match status" value="1"/>
</dbReference>
<dbReference type="Pfam" id="PF01165">
    <property type="entry name" value="Ribosomal_S21"/>
    <property type="match status" value="1"/>
</dbReference>
<dbReference type="PRINTS" id="PR00976">
    <property type="entry name" value="RIBOSOMALS21"/>
</dbReference>
<dbReference type="PROSITE" id="PS01181">
    <property type="entry name" value="RIBOSOMAL_S21"/>
    <property type="match status" value="1"/>
</dbReference>
<proteinExistence type="inferred from homology"/>